<comment type="function">
    <text evidence="1">Plays a role in pre-mRNA splicing as a core component of the spliceosomal U1, U2, U4 and U5 small nuclear ribonucleoproteins (snRNPs), the building blocks of the spliceosome. Component of both the pre-catalytic spliceosome B complex and activated spliceosome C complexes. As a component of the minor spliceosome, involved in the splicing of U12-type introns in pre-mRNAs. As part of the U7 snRNP it is involved in histone 3'-end processing.</text>
</comment>
<comment type="subunit">
    <text evidence="1">Core component of the spliceosomal U1, U2, U4 and U5 small nuclear ribonucleoproteins (snRNPs), the building blocks of the spliceosome. Most spliceosomal snRNPs contain a common set of Sm proteins, SNRPB, SNRPD1, SNRPD2, SNRPD3, SNRPE, SNRPF and SNRPG that assemble in a heptameric protein ring on the Sm site of the small nuclear RNA to form the core snRNP. Component of the U1 snRNP. The U1 snRNP is composed of the U1 snRNA and the 7 core Sm proteins SNRPB, SNRPD1, SNRPD2, SNRPD3, SNRPE, SNRPF and SNRPG, and at least three U1 snRNP-specific proteins SNRNP70/U1-70K, SNRPA/U1-A and SNRPC/U1-C. Component of the U4/U6-U5 tri-snRNP complex composed of the U4, U6 and U5 snRNAs and at least PRPF3, PRPF4, PRPF6, PRPF8, PRPF31, SNRNP200, TXNL4A, SNRNP40, SNRPB, SNRPD1, SNRPD2, SNRPD3, SNRPE, SNRPF, SNRPG, DDX23, CD2BP2, PPIH, SNU13, EFTUD2, SART1 and USP39, plus LSM2, LSM3, LSM4, LSM5, LSM6, LSM7 and LSM8. Component of the U7 snRNP complex, or U7 Sm protein core complex, that is composed of the U7 snRNA and at least LSM10, LSM11, SNRPB, SNRPD3, SNRPE, SNRPF and SNRPG; the complex does not contain SNRPD1 and SNRPD2. Component of the minor spliceosome, which splices U12-type introns. Part of the SMN-Sm complex that contains SMN1, GEMIN2/SIP1, DDX20/GEMIN3, GEMIN4, GEMIN5, GEMIN6, GEMIN7, GEMIN8, STRAP/UNRIP and the Sm proteins SNRPB, SNRPD1, SNRPD2, SNRPD3, SNRPE, SNRPF and SNRPG; catalyzes core snRNPs assembly. Forms a 6S pICln-Sm complex composed of CLNS1A/pICln, SNRPD1, SNRPD2, SNRPE, SNRPF and SNRPG; ring-like structure where CLNS1A/pICln mimics additional Sm proteins and which is unable to assemble into the core snRNP. Interacts with SMN1; the interaction is direct. Interacts with GEMIN2 (via N-terminus); the interaction is direct. Interacts with SNRPF; the interaction is direct. Interacts with SNRPG; the interaction is direct.</text>
</comment>
<comment type="subcellular location">
    <subcellularLocation>
        <location evidence="1">Cytoplasm</location>
        <location evidence="1">Cytosol</location>
    </subcellularLocation>
    <subcellularLocation>
        <location evidence="1">Nucleus</location>
    </subcellularLocation>
    <text evidence="1">SMN-mediated assembly into core snRNPs occurs in the cytosol before SMN-mediated transport to the nucleus to be included in spliceosomes.</text>
</comment>
<comment type="similarity">
    <text evidence="3">Belongs to the snRNP Sm proteins family.</text>
</comment>
<sequence length="92" mass="10818">MAYRGQAQKVQKVMVQPINLIFRYLQNRSRIQVWLYEQVNMRIEGCIIGFDEYMNLVLDDAEEIHSKTKSRKQLGRIMLKGDNITLLQSVSN</sequence>
<evidence type="ECO:0000250" key="1">
    <source>
        <dbReference type="UniProtKB" id="P62304"/>
    </source>
</evidence>
<evidence type="ECO:0000255" key="2">
    <source>
        <dbReference type="PROSITE-ProRule" id="PRU01346"/>
    </source>
</evidence>
<evidence type="ECO:0000305" key="3"/>
<organism>
    <name type="scientific">Sus scrofa</name>
    <name type="common">Pig</name>
    <dbReference type="NCBI Taxonomy" id="9823"/>
    <lineage>
        <taxon>Eukaryota</taxon>
        <taxon>Metazoa</taxon>
        <taxon>Chordata</taxon>
        <taxon>Craniata</taxon>
        <taxon>Vertebrata</taxon>
        <taxon>Euteleostomi</taxon>
        <taxon>Mammalia</taxon>
        <taxon>Eutheria</taxon>
        <taxon>Laurasiatheria</taxon>
        <taxon>Artiodactyla</taxon>
        <taxon>Suina</taxon>
        <taxon>Suidae</taxon>
        <taxon>Sus</taxon>
    </lineage>
</organism>
<reference key="1">
    <citation type="submission" date="2006-05" db="EMBL/GenBank/DDBJ databases">
        <title>Generation and analysis of cDNA sequences derived from a porcine skeletal muscle library.</title>
        <authorList>
            <person name="Cai G."/>
            <person name="Chen Y."/>
            <person name="Wang C."/>
            <person name="Li J."/>
            <person name="Peng G."/>
            <person name="Zhang H."/>
        </authorList>
    </citation>
    <scope>NUCLEOTIDE SEQUENCE [LARGE SCALE MRNA]</scope>
    <source>
        <tissue>Longissimus dorsi muscle</tissue>
    </source>
</reference>
<feature type="chain" id="PRO_0000314782" description="Small nuclear ribonucleoprotein E">
    <location>
        <begin position="1"/>
        <end position="92"/>
    </location>
</feature>
<feature type="domain" description="Sm" evidence="2">
    <location>
        <begin position="18"/>
        <end position="92"/>
    </location>
</feature>
<accession>A1XQR9</accession>
<proteinExistence type="inferred from homology"/>
<protein>
    <recommendedName>
        <fullName>Small nuclear ribonucleoprotein E</fullName>
        <shortName>snRNP-E</shortName>
    </recommendedName>
    <alternativeName>
        <fullName>Sm protein E</fullName>
        <shortName>Sm-E</shortName>
        <shortName>SmE</shortName>
    </alternativeName>
</protein>
<keyword id="KW-0963">Cytoplasm</keyword>
<keyword id="KW-0507">mRNA processing</keyword>
<keyword id="KW-0508">mRNA splicing</keyword>
<keyword id="KW-0539">Nucleus</keyword>
<keyword id="KW-1185">Reference proteome</keyword>
<keyword id="KW-0687">Ribonucleoprotein</keyword>
<keyword id="KW-0694">RNA-binding</keyword>
<keyword id="KW-0747">Spliceosome</keyword>
<dbReference type="EMBL" id="DQ629140">
    <property type="protein sequence ID" value="ABK55625.1"/>
    <property type="molecule type" value="mRNA"/>
</dbReference>
<dbReference type="EMBL" id="DQ629141">
    <property type="protein sequence ID" value="ABK55626.1"/>
    <property type="molecule type" value="mRNA"/>
</dbReference>
<dbReference type="RefSeq" id="NP_001090934.1">
    <property type="nucleotide sequence ID" value="NM_001097465.1"/>
</dbReference>
<dbReference type="SMR" id="A1XQR9"/>
<dbReference type="FunCoup" id="A1XQR9">
    <property type="interactions" value="519"/>
</dbReference>
<dbReference type="STRING" id="9823.ENSSSCP00000022254"/>
<dbReference type="PaxDb" id="9823-ENSSSCP00000022254"/>
<dbReference type="PeptideAtlas" id="A1XQR9"/>
<dbReference type="GeneID" id="100038330"/>
<dbReference type="KEGG" id="ssc:100038330"/>
<dbReference type="eggNOG" id="KOG1774">
    <property type="taxonomic scope" value="Eukaryota"/>
</dbReference>
<dbReference type="InParanoid" id="A1XQR9"/>
<dbReference type="OrthoDB" id="25620at2759"/>
<dbReference type="Proteomes" id="UP000008227">
    <property type="component" value="Unplaced"/>
</dbReference>
<dbReference type="Proteomes" id="UP000314985">
    <property type="component" value="Unplaced"/>
</dbReference>
<dbReference type="Proteomes" id="UP000694570">
    <property type="component" value="Unplaced"/>
</dbReference>
<dbReference type="Proteomes" id="UP000694571">
    <property type="component" value="Unplaced"/>
</dbReference>
<dbReference type="Proteomes" id="UP000694720">
    <property type="component" value="Unplaced"/>
</dbReference>
<dbReference type="Proteomes" id="UP000694722">
    <property type="component" value="Unplaced"/>
</dbReference>
<dbReference type="Proteomes" id="UP000694723">
    <property type="component" value="Unplaced"/>
</dbReference>
<dbReference type="Proteomes" id="UP000694724">
    <property type="component" value="Unplaced"/>
</dbReference>
<dbReference type="Proteomes" id="UP000694725">
    <property type="component" value="Unplaced"/>
</dbReference>
<dbReference type="Proteomes" id="UP000694726">
    <property type="component" value="Unplaced"/>
</dbReference>
<dbReference type="Proteomes" id="UP000694727">
    <property type="component" value="Unplaced"/>
</dbReference>
<dbReference type="Proteomes" id="UP000694728">
    <property type="component" value="Unplaced"/>
</dbReference>
<dbReference type="GO" id="GO:0005829">
    <property type="term" value="C:cytosol"/>
    <property type="evidence" value="ECO:0000250"/>
    <property type="project" value="UniProtKB"/>
</dbReference>
<dbReference type="GO" id="GO:0034709">
    <property type="term" value="C:methylosome"/>
    <property type="evidence" value="ECO:0000250"/>
    <property type="project" value="UniProtKB"/>
</dbReference>
<dbReference type="GO" id="GO:0005634">
    <property type="term" value="C:nucleus"/>
    <property type="evidence" value="ECO:0000250"/>
    <property type="project" value="UniProtKB"/>
</dbReference>
<dbReference type="GO" id="GO:0034715">
    <property type="term" value="C:pICln-Sm protein complex"/>
    <property type="evidence" value="ECO:0000250"/>
    <property type="project" value="UniProtKB"/>
</dbReference>
<dbReference type="GO" id="GO:0071011">
    <property type="term" value="C:precatalytic spliceosome"/>
    <property type="evidence" value="ECO:0000318"/>
    <property type="project" value="GO_Central"/>
</dbReference>
<dbReference type="GO" id="GO:0034719">
    <property type="term" value="C:SMN-Sm protein complex"/>
    <property type="evidence" value="ECO:0000250"/>
    <property type="project" value="UniProtKB"/>
</dbReference>
<dbReference type="GO" id="GO:0005685">
    <property type="term" value="C:U1 snRNP"/>
    <property type="evidence" value="ECO:0000250"/>
    <property type="project" value="UniProtKB"/>
</dbReference>
<dbReference type="GO" id="GO:0005686">
    <property type="term" value="C:U2 snRNP"/>
    <property type="evidence" value="ECO:0000318"/>
    <property type="project" value="GO_Central"/>
</dbReference>
<dbReference type="GO" id="GO:0071007">
    <property type="term" value="C:U2-type catalytic step 2 spliceosome"/>
    <property type="evidence" value="ECO:0000250"/>
    <property type="project" value="UniProtKB"/>
</dbReference>
<dbReference type="GO" id="GO:0071005">
    <property type="term" value="C:U2-type precatalytic spliceosome"/>
    <property type="evidence" value="ECO:0000250"/>
    <property type="project" value="UniProtKB"/>
</dbReference>
<dbReference type="GO" id="GO:0005684">
    <property type="term" value="C:U2-type spliceosomal complex"/>
    <property type="evidence" value="ECO:0000250"/>
    <property type="project" value="UniProtKB"/>
</dbReference>
<dbReference type="GO" id="GO:0005687">
    <property type="term" value="C:U4 snRNP"/>
    <property type="evidence" value="ECO:0000250"/>
    <property type="project" value="UniProtKB"/>
</dbReference>
<dbReference type="GO" id="GO:0046540">
    <property type="term" value="C:U4/U6 x U5 tri-snRNP complex"/>
    <property type="evidence" value="ECO:0000250"/>
    <property type="project" value="UniProtKB"/>
</dbReference>
<dbReference type="GO" id="GO:0005682">
    <property type="term" value="C:U5 snRNP"/>
    <property type="evidence" value="ECO:0000318"/>
    <property type="project" value="GO_Central"/>
</dbReference>
<dbReference type="GO" id="GO:0005683">
    <property type="term" value="C:U7 snRNP"/>
    <property type="evidence" value="ECO:0000250"/>
    <property type="project" value="UniProtKB"/>
</dbReference>
<dbReference type="GO" id="GO:0003723">
    <property type="term" value="F:RNA binding"/>
    <property type="evidence" value="ECO:0007669"/>
    <property type="project" value="UniProtKB-KW"/>
</dbReference>
<dbReference type="GO" id="GO:0000398">
    <property type="term" value="P:mRNA splicing, via spliceosome"/>
    <property type="evidence" value="ECO:0000250"/>
    <property type="project" value="UniProtKB"/>
</dbReference>
<dbReference type="GO" id="GO:0000387">
    <property type="term" value="P:spliceosomal snRNP assembly"/>
    <property type="evidence" value="ECO:0000250"/>
    <property type="project" value="UniProtKB"/>
</dbReference>
<dbReference type="CDD" id="cd01718">
    <property type="entry name" value="Sm_E"/>
    <property type="match status" value="1"/>
</dbReference>
<dbReference type="FunFam" id="2.30.30.100:FF:000059">
    <property type="entry name" value="Small nuclear ribonucleoprotein E"/>
    <property type="match status" value="1"/>
</dbReference>
<dbReference type="Gene3D" id="2.30.30.100">
    <property type="match status" value="1"/>
</dbReference>
<dbReference type="InterPro" id="IPR010920">
    <property type="entry name" value="LSM_dom_sf"/>
</dbReference>
<dbReference type="InterPro" id="IPR047575">
    <property type="entry name" value="Sm"/>
</dbReference>
<dbReference type="InterPro" id="IPR001163">
    <property type="entry name" value="Sm_dom_euk/arc"/>
</dbReference>
<dbReference type="InterPro" id="IPR027078">
    <property type="entry name" value="snRNP-E"/>
</dbReference>
<dbReference type="PANTHER" id="PTHR11193">
    <property type="entry name" value="SMALL NUCLEAR RIBONUCLEOPROTEIN E"/>
    <property type="match status" value="1"/>
</dbReference>
<dbReference type="Pfam" id="PF01423">
    <property type="entry name" value="LSM"/>
    <property type="match status" value="1"/>
</dbReference>
<dbReference type="SMART" id="SM00651">
    <property type="entry name" value="Sm"/>
    <property type="match status" value="1"/>
</dbReference>
<dbReference type="SUPFAM" id="SSF50182">
    <property type="entry name" value="Sm-like ribonucleoproteins"/>
    <property type="match status" value="1"/>
</dbReference>
<dbReference type="PROSITE" id="PS52002">
    <property type="entry name" value="SM"/>
    <property type="match status" value="1"/>
</dbReference>
<gene>
    <name type="primary">SNRPE</name>
</gene>
<name>RUXE_PIG</name>